<keyword id="KW-0378">Hydrolase</keyword>
<keyword id="KW-0479">Metal-binding</keyword>
<keyword id="KW-1185">Reference proteome</keyword>
<keyword id="KW-0862">Zinc</keyword>
<feature type="chain" id="PRO_0000305340" description="Beta-lactamase hydrolase-like protein">
    <location>
        <begin position="1"/>
        <end position="431"/>
    </location>
</feature>
<feature type="binding site" evidence="1">
    <location>
        <position position="212"/>
    </location>
    <ligand>
        <name>Zn(2+)</name>
        <dbReference type="ChEBI" id="CHEBI:29105"/>
    </ligand>
</feature>
<feature type="binding site" evidence="1">
    <location>
        <position position="214"/>
    </location>
    <ligand>
        <name>Zn(2+)</name>
        <dbReference type="ChEBI" id="CHEBI:29105"/>
    </ligand>
</feature>
<feature type="binding site" evidence="1">
    <location>
        <position position="286"/>
    </location>
    <ligand>
        <name>Zn(2+)</name>
        <dbReference type="ChEBI" id="CHEBI:29105"/>
    </ligand>
</feature>
<feature type="binding site" evidence="1">
    <location>
        <position position="309"/>
    </location>
    <ligand>
        <name>substrate</name>
    </ligand>
</feature>
<comment type="function">
    <text evidence="2">Could play a role in cell adherence or biofilm development.</text>
</comment>
<comment type="cofactor">
    <cofactor evidence="1">
        <name>Zn(2+)</name>
        <dbReference type="ChEBI" id="CHEBI:29105"/>
    </cofactor>
</comment>
<comment type="induction">
    <text evidence="2">Repressed by BigR.</text>
</comment>
<comment type="miscellaneous">
    <text evidence="3">Probably part of an operon that comprises bigR, PD_1892, PD_1893 and PD_1894.</text>
</comment>
<comment type="similarity">
    <text evidence="3">Belongs to the metallo-beta-lactamase superfamily.</text>
</comment>
<gene>
    <name evidence="2" type="primary">blh</name>
    <name type="ordered locus">PD_1890</name>
</gene>
<reference key="1">
    <citation type="journal article" date="2003" name="J. Bacteriol.">
        <title>Comparative analyses of the complete genome sequences of Pierce's disease and citrus variegated chlorosis strains of Xylella fastidiosa.</title>
        <authorList>
            <person name="Van Sluys M.A."/>
            <person name="de Oliveira M.C."/>
            <person name="Monteiro-Vitorello C.B."/>
            <person name="Miyaki C.Y."/>
            <person name="Furlan L.R."/>
            <person name="Camargo L.E.A."/>
            <person name="da Silva A.C.R."/>
            <person name="Moon D.H."/>
            <person name="Takita M.A."/>
            <person name="Lemos E.G.M."/>
            <person name="Machado M.A."/>
            <person name="Ferro M.I.T."/>
            <person name="da Silva F.R."/>
            <person name="Goldman M.H.S."/>
            <person name="Goldman G.H."/>
            <person name="Lemos M.V.F."/>
            <person name="El-Dorry H."/>
            <person name="Tsai S.M."/>
            <person name="Carrer H."/>
            <person name="Carraro D.M."/>
            <person name="de Oliveira R.C."/>
            <person name="Nunes L.R."/>
            <person name="Siqueira W.J."/>
            <person name="Coutinho L.L."/>
            <person name="Kimura E.T."/>
            <person name="Ferro E.S."/>
            <person name="Harakava R."/>
            <person name="Kuramae E.E."/>
            <person name="Marino C.L."/>
            <person name="Giglioti E."/>
            <person name="Abreu I.L."/>
            <person name="Alves L.M.C."/>
            <person name="do Amaral A.M."/>
            <person name="Baia G.S."/>
            <person name="Blanco S.R."/>
            <person name="Brito M.S."/>
            <person name="Cannavan F.S."/>
            <person name="Celestino A.V."/>
            <person name="da Cunha A.F."/>
            <person name="Fenille R.C."/>
            <person name="Ferro J.A."/>
            <person name="Formighieri E.F."/>
            <person name="Kishi L.T."/>
            <person name="Leoni S.G."/>
            <person name="Oliveira A.R."/>
            <person name="Rosa V.E. Jr."/>
            <person name="Sassaki F.T."/>
            <person name="Sena J.A.D."/>
            <person name="de Souza A.A."/>
            <person name="Truffi D."/>
            <person name="Tsukumo F."/>
            <person name="Yanai G.M."/>
            <person name="Zaros L.G."/>
            <person name="Civerolo E.L."/>
            <person name="Simpson A.J.G."/>
            <person name="Almeida N.F. Jr."/>
            <person name="Setubal J.C."/>
            <person name="Kitajima J.P."/>
        </authorList>
    </citation>
    <scope>NUCLEOTIDE SEQUENCE [LARGE SCALE GENOMIC DNA]</scope>
    <source>
        <strain>Temecula1 / ATCC 700964</strain>
    </source>
</reference>
<name>BLH_XYLFT</name>
<proteinExistence type="inferred from homology"/>
<evidence type="ECO:0000250" key="1">
    <source>
        <dbReference type="UniProtKB" id="P25910"/>
    </source>
</evidence>
<evidence type="ECO:0000250" key="2">
    <source>
        <dbReference type="UniProtKB" id="Q9PFB0"/>
    </source>
</evidence>
<evidence type="ECO:0000305" key="3"/>
<organism>
    <name type="scientific">Xylella fastidiosa (strain Temecula1 / ATCC 700964)</name>
    <dbReference type="NCBI Taxonomy" id="183190"/>
    <lineage>
        <taxon>Bacteria</taxon>
        <taxon>Pseudomonadati</taxon>
        <taxon>Pseudomonadota</taxon>
        <taxon>Gammaproteobacteria</taxon>
        <taxon>Lysobacterales</taxon>
        <taxon>Lysobacteraceae</taxon>
        <taxon>Xylella</taxon>
    </lineage>
</organism>
<sequence length="431" mass="47371">MKIVDINERLAISGQPNTDEFINFARRGYRSIINLRPDGEEPNQPGNDAEQAAARRAGLAYNFVPVIGTSITEADIQAFQRAIATTEGSVLVHCKSGTRALMLYALSEVIDGRMKRDEVEALGHAHGFDLGRAVTWLKRQAIQTPRVSGFFDPRTGSIQYVVTDQTTKRCAIIDPVLDFDEKSGATATTNADAILAHVEQQGLTVEWILDTHPHADHFSAAQYLKQRTGAPTAIGTHVTKVQRLWREIYNLPTLSTNGSQWDHLFADGDVFNVGSIKGRVMFSPGHTLASVTYVIGDTAFVHDTIFMPDSGTARADFPGGSARALWSSIQAILSLPDETRLFTGHDYQPSGRHPRWESTVGEQKKANLHLAGVDETTFVALREARDKTLPMPKLILHALQVNVLGGQLPEPEANGRRYLKFPLNALEGAAW</sequence>
<accession>Q87AD6</accession>
<protein>
    <recommendedName>
        <fullName evidence="2">Beta-lactamase hydrolase-like protein</fullName>
        <shortName evidence="2">BLH</shortName>
        <ecNumber>3.-.-.-</ecNumber>
    </recommendedName>
</protein>
<dbReference type="EC" id="3.-.-.-"/>
<dbReference type="EMBL" id="AE009442">
    <property type="protein sequence ID" value="AAO29721.1"/>
    <property type="molecule type" value="Genomic_DNA"/>
</dbReference>
<dbReference type="RefSeq" id="WP_004090446.1">
    <property type="nucleotide sequence ID" value="NC_004556.1"/>
</dbReference>
<dbReference type="SMR" id="Q87AD6"/>
<dbReference type="GeneID" id="93905749"/>
<dbReference type="KEGG" id="xft:PD_1890"/>
<dbReference type="HOGENOM" id="CLU_030571_9_1_6"/>
<dbReference type="Proteomes" id="UP000002516">
    <property type="component" value="Chromosome"/>
</dbReference>
<dbReference type="GO" id="GO:0016787">
    <property type="term" value="F:hydrolase activity"/>
    <property type="evidence" value="ECO:0007669"/>
    <property type="project" value="UniProtKB-KW"/>
</dbReference>
<dbReference type="GO" id="GO:0046872">
    <property type="term" value="F:metal ion binding"/>
    <property type="evidence" value="ECO:0007669"/>
    <property type="project" value="UniProtKB-KW"/>
</dbReference>
<dbReference type="GO" id="GO:0050313">
    <property type="term" value="F:sulfur dioxygenase activity"/>
    <property type="evidence" value="ECO:0007669"/>
    <property type="project" value="InterPro"/>
</dbReference>
<dbReference type="GO" id="GO:0006749">
    <property type="term" value="P:glutathione metabolic process"/>
    <property type="evidence" value="ECO:0007669"/>
    <property type="project" value="InterPro"/>
</dbReference>
<dbReference type="GO" id="GO:0070813">
    <property type="term" value="P:hydrogen sulfide metabolic process"/>
    <property type="evidence" value="ECO:0007669"/>
    <property type="project" value="TreeGrafter"/>
</dbReference>
<dbReference type="CDD" id="cd07724">
    <property type="entry name" value="POD-like_MBL-fold"/>
    <property type="match status" value="1"/>
</dbReference>
<dbReference type="CDD" id="cd14503">
    <property type="entry name" value="PTP-bact"/>
    <property type="match status" value="1"/>
</dbReference>
<dbReference type="Gene3D" id="3.90.190.10">
    <property type="entry name" value="Protein tyrosine phosphatase superfamily"/>
    <property type="match status" value="1"/>
</dbReference>
<dbReference type="Gene3D" id="3.60.15.10">
    <property type="entry name" value="Ribonuclease Z/Hydroxyacylglutathione hydrolase-like"/>
    <property type="match status" value="1"/>
</dbReference>
<dbReference type="InterPro" id="IPR005939">
    <property type="entry name" value="BLH_phosphatase-like"/>
</dbReference>
<dbReference type="InterPro" id="IPR053449">
    <property type="entry name" value="MBL-like_hydrolase"/>
</dbReference>
<dbReference type="InterPro" id="IPR001279">
    <property type="entry name" value="Metallo-B-lactamas"/>
</dbReference>
<dbReference type="InterPro" id="IPR051682">
    <property type="entry name" value="Mito_Persulfide_Diox"/>
</dbReference>
<dbReference type="InterPro" id="IPR044528">
    <property type="entry name" value="POD-like_MBL-fold"/>
</dbReference>
<dbReference type="InterPro" id="IPR029021">
    <property type="entry name" value="Prot-tyrosine_phosphatase-like"/>
</dbReference>
<dbReference type="InterPro" id="IPR036866">
    <property type="entry name" value="RibonucZ/Hydroxyglut_hydro"/>
</dbReference>
<dbReference type="NCBIfam" id="NF040641">
    <property type="entry name" value="bifunc_ST_SDO"/>
    <property type="match status" value="1"/>
</dbReference>
<dbReference type="NCBIfam" id="TIGR01244">
    <property type="entry name" value="TIGR01244 family sulfur transferase"/>
    <property type="match status" value="1"/>
</dbReference>
<dbReference type="PANTHER" id="PTHR43084">
    <property type="entry name" value="PERSULFIDE DIOXYGENASE ETHE1"/>
    <property type="match status" value="1"/>
</dbReference>
<dbReference type="PANTHER" id="PTHR43084:SF1">
    <property type="entry name" value="PERSULFIDE DIOXYGENASE ETHE1, MITOCHONDRIAL"/>
    <property type="match status" value="1"/>
</dbReference>
<dbReference type="Pfam" id="PF04273">
    <property type="entry name" value="BLH_phosphatase"/>
    <property type="match status" value="1"/>
</dbReference>
<dbReference type="Pfam" id="PF00753">
    <property type="entry name" value="Lactamase_B"/>
    <property type="match status" value="1"/>
</dbReference>
<dbReference type="SMART" id="SM00849">
    <property type="entry name" value="Lactamase_B"/>
    <property type="match status" value="1"/>
</dbReference>
<dbReference type="SUPFAM" id="SSF52799">
    <property type="entry name" value="(Phosphotyrosine protein) phosphatases II"/>
    <property type="match status" value="1"/>
</dbReference>
<dbReference type="SUPFAM" id="SSF56281">
    <property type="entry name" value="Metallo-hydrolase/oxidoreductase"/>
    <property type="match status" value="1"/>
</dbReference>